<comment type="function">
    <text evidence="5">Negative regulator of the canonical Wnt signaling pathway involved in neuroectodermal patterning. Acts by specifically binding phosphatidylinositol 4,5-bisphosphate (PtdIns(4,5)P2), translocating to the cell membrane and interacting with key regulators of the canonical Wnt signaling pathway, such as components of the beta-catenin destruction complex.</text>
</comment>
<comment type="subunit">
    <text evidence="4 5">Interacts with APC.</text>
</comment>
<comment type="subcellular location">
    <subcellularLocation>
        <location evidence="5">Cell membrane</location>
        <topology evidence="5">Peripheral membrane protein</topology>
    </subcellularLocation>
    <text>Translocates to the cell membrane following binding to PtdIns(4,5)P2.</text>
</comment>
<comment type="alternative products">
    <event type="alternative splicing"/>
    <isoform>
        <id>Q8N7J2-1</id>
        <name>1</name>
        <sequence type="displayed"/>
    </isoform>
    <isoform>
        <id>Q8N7J2-2</id>
        <name>2</name>
        <sequence type="described" ref="VSP_024089"/>
    </isoform>
</comment>
<comment type="similarity">
    <text evidence="8">Belongs to the Amer family.</text>
</comment>
<comment type="sequence caution" evidence="8">
    <conflict type="erroneous initiation">
        <sequence resource="EMBL-CDS" id="AAH32653"/>
    </conflict>
    <text>Extended N-terminus.</text>
</comment>
<comment type="sequence caution" evidence="8">
    <conflict type="frameshift">
        <sequence resource="EMBL-CDS" id="AAH41392"/>
    </conflict>
</comment>
<comment type="sequence caution" evidence="8">
    <conflict type="erroneous initiation">
        <sequence resource="EMBL-CDS" id="BAC05288"/>
    </conflict>
    <text>Truncated N-terminus.</text>
</comment>
<keyword id="KW-0025">Alternative splicing</keyword>
<keyword id="KW-1003">Cell membrane</keyword>
<keyword id="KW-0446">Lipid-binding</keyword>
<keyword id="KW-0472">Membrane</keyword>
<keyword id="KW-0597">Phosphoprotein</keyword>
<keyword id="KW-1267">Proteomics identification</keyword>
<keyword id="KW-1185">Reference proteome</keyword>
<keyword id="KW-0879">Wnt signaling pathway</keyword>
<accession>Q8N7J2</accession>
<accession>Q5RL80</accession>
<accession>Q5VX56</accession>
<accession>Q8N593</accession>
<accession>Q96NN5</accession>
<protein>
    <recommendedName>
        <fullName>APC membrane recruitment protein 2</fullName>
        <shortName>Amer2</shortName>
    </recommendedName>
    <alternativeName>
        <fullName>Protein FAM123A</fullName>
    </alternativeName>
</protein>
<reference key="1">
    <citation type="journal article" date="2004" name="Nat. Genet.">
        <title>Complete sequencing and characterization of 21,243 full-length human cDNAs.</title>
        <authorList>
            <person name="Ota T."/>
            <person name="Suzuki Y."/>
            <person name="Nishikawa T."/>
            <person name="Otsuki T."/>
            <person name="Sugiyama T."/>
            <person name="Irie R."/>
            <person name="Wakamatsu A."/>
            <person name="Hayashi K."/>
            <person name="Sato H."/>
            <person name="Nagai K."/>
            <person name="Kimura K."/>
            <person name="Makita H."/>
            <person name="Sekine M."/>
            <person name="Obayashi M."/>
            <person name="Nishi T."/>
            <person name="Shibahara T."/>
            <person name="Tanaka T."/>
            <person name="Ishii S."/>
            <person name="Yamamoto J."/>
            <person name="Saito K."/>
            <person name="Kawai Y."/>
            <person name="Isono Y."/>
            <person name="Nakamura Y."/>
            <person name="Nagahari K."/>
            <person name="Murakami K."/>
            <person name="Yasuda T."/>
            <person name="Iwayanagi T."/>
            <person name="Wagatsuma M."/>
            <person name="Shiratori A."/>
            <person name="Sudo H."/>
            <person name="Hosoiri T."/>
            <person name="Kaku Y."/>
            <person name="Kodaira H."/>
            <person name="Kondo H."/>
            <person name="Sugawara M."/>
            <person name="Takahashi M."/>
            <person name="Kanda K."/>
            <person name="Yokoi T."/>
            <person name="Furuya T."/>
            <person name="Kikkawa E."/>
            <person name="Omura Y."/>
            <person name="Abe K."/>
            <person name="Kamihara K."/>
            <person name="Katsuta N."/>
            <person name="Sato K."/>
            <person name="Tanikawa M."/>
            <person name="Yamazaki M."/>
            <person name="Ninomiya K."/>
            <person name="Ishibashi T."/>
            <person name="Yamashita H."/>
            <person name="Murakawa K."/>
            <person name="Fujimori K."/>
            <person name="Tanai H."/>
            <person name="Kimata M."/>
            <person name="Watanabe M."/>
            <person name="Hiraoka S."/>
            <person name="Chiba Y."/>
            <person name="Ishida S."/>
            <person name="Ono Y."/>
            <person name="Takiguchi S."/>
            <person name="Watanabe S."/>
            <person name="Yosida M."/>
            <person name="Hotuta T."/>
            <person name="Kusano J."/>
            <person name="Kanehori K."/>
            <person name="Takahashi-Fujii A."/>
            <person name="Hara H."/>
            <person name="Tanase T.-O."/>
            <person name="Nomura Y."/>
            <person name="Togiya S."/>
            <person name="Komai F."/>
            <person name="Hara R."/>
            <person name="Takeuchi K."/>
            <person name="Arita M."/>
            <person name="Imose N."/>
            <person name="Musashino K."/>
            <person name="Yuuki H."/>
            <person name="Oshima A."/>
            <person name="Sasaki N."/>
            <person name="Aotsuka S."/>
            <person name="Yoshikawa Y."/>
            <person name="Matsunawa H."/>
            <person name="Ichihara T."/>
            <person name="Shiohata N."/>
            <person name="Sano S."/>
            <person name="Moriya S."/>
            <person name="Momiyama H."/>
            <person name="Satoh N."/>
            <person name="Takami S."/>
            <person name="Terashima Y."/>
            <person name="Suzuki O."/>
            <person name="Nakagawa S."/>
            <person name="Senoh A."/>
            <person name="Mizoguchi H."/>
            <person name="Goto Y."/>
            <person name="Shimizu F."/>
            <person name="Wakebe H."/>
            <person name="Hishigaki H."/>
            <person name="Watanabe T."/>
            <person name="Sugiyama A."/>
            <person name="Takemoto M."/>
            <person name="Kawakami B."/>
            <person name="Yamazaki M."/>
            <person name="Watanabe K."/>
            <person name="Kumagai A."/>
            <person name="Itakura S."/>
            <person name="Fukuzumi Y."/>
            <person name="Fujimori Y."/>
            <person name="Komiyama M."/>
            <person name="Tashiro H."/>
            <person name="Tanigami A."/>
            <person name="Fujiwara T."/>
            <person name="Ono T."/>
            <person name="Yamada K."/>
            <person name="Fujii Y."/>
            <person name="Ozaki K."/>
            <person name="Hirao M."/>
            <person name="Ohmori Y."/>
            <person name="Kawabata A."/>
            <person name="Hikiji T."/>
            <person name="Kobatake N."/>
            <person name="Inagaki H."/>
            <person name="Ikema Y."/>
            <person name="Okamoto S."/>
            <person name="Okitani R."/>
            <person name="Kawakami T."/>
            <person name="Noguchi S."/>
            <person name="Itoh T."/>
            <person name="Shigeta K."/>
            <person name="Senba T."/>
            <person name="Matsumura K."/>
            <person name="Nakajima Y."/>
            <person name="Mizuno T."/>
            <person name="Morinaga M."/>
            <person name="Sasaki M."/>
            <person name="Togashi T."/>
            <person name="Oyama M."/>
            <person name="Hata H."/>
            <person name="Watanabe M."/>
            <person name="Komatsu T."/>
            <person name="Mizushima-Sugano J."/>
            <person name="Satoh T."/>
            <person name="Shirai Y."/>
            <person name="Takahashi Y."/>
            <person name="Nakagawa K."/>
            <person name="Okumura K."/>
            <person name="Nagase T."/>
            <person name="Nomura N."/>
            <person name="Kikuchi H."/>
            <person name="Masuho Y."/>
            <person name="Yamashita R."/>
            <person name="Nakai K."/>
            <person name="Yada T."/>
            <person name="Nakamura Y."/>
            <person name="Ohara O."/>
            <person name="Isogai T."/>
            <person name="Sugano S."/>
        </authorList>
    </citation>
    <scope>NUCLEOTIDE SEQUENCE [LARGE SCALE MRNA] (ISOFORM 2)</scope>
    <scope>NUCLEOTIDE SEQUENCE [LARGE SCALE MRNA] OF 47-671 (ISOFORM 1)</scope>
    <source>
        <tissue>Brain</tissue>
        <tissue>Cerebellum</tissue>
    </source>
</reference>
<reference key="2">
    <citation type="journal article" date="2004" name="Nature">
        <title>The DNA sequence and analysis of human chromosome 13.</title>
        <authorList>
            <person name="Dunham A."/>
            <person name="Matthews L.H."/>
            <person name="Burton J."/>
            <person name="Ashurst J.L."/>
            <person name="Howe K.L."/>
            <person name="Ashcroft K.J."/>
            <person name="Beare D.M."/>
            <person name="Burford D.C."/>
            <person name="Hunt S.E."/>
            <person name="Griffiths-Jones S."/>
            <person name="Jones M.C."/>
            <person name="Keenan S.J."/>
            <person name="Oliver K."/>
            <person name="Scott C.E."/>
            <person name="Ainscough R."/>
            <person name="Almeida J.P."/>
            <person name="Ambrose K.D."/>
            <person name="Andrews D.T."/>
            <person name="Ashwell R.I.S."/>
            <person name="Babbage A.K."/>
            <person name="Bagguley C.L."/>
            <person name="Bailey J."/>
            <person name="Bannerjee R."/>
            <person name="Barlow K.F."/>
            <person name="Bates K."/>
            <person name="Beasley H."/>
            <person name="Bird C.P."/>
            <person name="Bray-Allen S."/>
            <person name="Brown A.J."/>
            <person name="Brown J.Y."/>
            <person name="Burrill W."/>
            <person name="Carder C."/>
            <person name="Carter N.P."/>
            <person name="Chapman J.C."/>
            <person name="Clamp M.E."/>
            <person name="Clark S.Y."/>
            <person name="Clarke G."/>
            <person name="Clee C.M."/>
            <person name="Clegg S.C."/>
            <person name="Cobley V."/>
            <person name="Collins J.E."/>
            <person name="Corby N."/>
            <person name="Coville G.J."/>
            <person name="Deloukas P."/>
            <person name="Dhami P."/>
            <person name="Dunham I."/>
            <person name="Dunn M."/>
            <person name="Earthrowl M.E."/>
            <person name="Ellington A.G."/>
            <person name="Faulkner L."/>
            <person name="Frankish A.G."/>
            <person name="Frankland J."/>
            <person name="French L."/>
            <person name="Garner P."/>
            <person name="Garnett J."/>
            <person name="Gilbert J.G.R."/>
            <person name="Gilson C.J."/>
            <person name="Ghori J."/>
            <person name="Grafham D.V."/>
            <person name="Gribble S.M."/>
            <person name="Griffiths C."/>
            <person name="Hall R.E."/>
            <person name="Hammond S."/>
            <person name="Harley J.L."/>
            <person name="Hart E.A."/>
            <person name="Heath P.D."/>
            <person name="Howden P.J."/>
            <person name="Huckle E.J."/>
            <person name="Hunt P.J."/>
            <person name="Hunt A.R."/>
            <person name="Johnson C."/>
            <person name="Johnson D."/>
            <person name="Kay M."/>
            <person name="Kimberley A.M."/>
            <person name="King A."/>
            <person name="Laird G.K."/>
            <person name="Langford C.J."/>
            <person name="Lawlor S."/>
            <person name="Leongamornlert D.A."/>
            <person name="Lloyd D.M."/>
            <person name="Lloyd C."/>
            <person name="Loveland J.E."/>
            <person name="Lovell J."/>
            <person name="Martin S."/>
            <person name="Mashreghi-Mohammadi M."/>
            <person name="McLaren S.J."/>
            <person name="McMurray A."/>
            <person name="Milne S."/>
            <person name="Moore M.J.F."/>
            <person name="Nickerson T."/>
            <person name="Palmer S.A."/>
            <person name="Pearce A.V."/>
            <person name="Peck A.I."/>
            <person name="Pelan S."/>
            <person name="Phillimore B."/>
            <person name="Porter K.M."/>
            <person name="Rice C.M."/>
            <person name="Searle S."/>
            <person name="Sehra H.K."/>
            <person name="Shownkeen R."/>
            <person name="Skuce C.D."/>
            <person name="Smith M."/>
            <person name="Steward C.A."/>
            <person name="Sycamore N."/>
            <person name="Tester J."/>
            <person name="Thomas D.W."/>
            <person name="Tracey A."/>
            <person name="Tromans A."/>
            <person name="Tubby B."/>
            <person name="Wall M."/>
            <person name="Wallis J.M."/>
            <person name="West A.P."/>
            <person name="Whitehead S.L."/>
            <person name="Willey D.L."/>
            <person name="Wilming L."/>
            <person name="Wray P.W."/>
            <person name="Wright M.W."/>
            <person name="Young L."/>
            <person name="Coulson A."/>
            <person name="Durbin R.M."/>
            <person name="Hubbard T."/>
            <person name="Sulston J.E."/>
            <person name="Beck S."/>
            <person name="Bentley D.R."/>
            <person name="Rogers J."/>
            <person name="Ross M.T."/>
        </authorList>
    </citation>
    <scope>NUCLEOTIDE SEQUENCE [LARGE SCALE GENOMIC DNA]</scope>
</reference>
<reference key="3">
    <citation type="journal article" date="2004" name="Genome Res.">
        <title>The status, quality, and expansion of the NIH full-length cDNA project: the Mammalian Gene Collection (MGC).</title>
        <authorList>
            <consortium name="The MGC Project Team"/>
        </authorList>
    </citation>
    <scope>NUCLEOTIDE SEQUENCE [LARGE SCALE MRNA] (ISOFORM 1)</scope>
    <scope>NUCLEOTIDE SEQUENCE [LARGE SCALE MRNA] OF 24-671 (ISOFORM 2)</scope>
    <source>
        <tissue>Brain</tissue>
        <tissue>Eye</tissue>
    </source>
</reference>
<reference key="4">
    <citation type="journal article" date="2006" name="Science">
        <title>The consensus coding sequences of human breast and colorectal cancers.</title>
        <authorList>
            <person name="Sjoeblom T."/>
            <person name="Jones S."/>
            <person name="Wood L.D."/>
            <person name="Parsons D.W."/>
            <person name="Lin J."/>
            <person name="Barber T.D."/>
            <person name="Mandelker D."/>
            <person name="Leary R.J."/>
            <person name="Ptak J."/>
            <person name="Silliman N."/>
            <person name="Szabo S."/>
            <person name="Buckhaults P."/>
            <person name="Farrell C."/>
            <person name="Meeh P."/>
            <person name="Markowitz S.D."/>
            <person name="Willis J."/>
            <person name="Dawson D."/>
            <person name="Willson J.K.V."/>
            <person name="Gazdar A.F."/>
            <person name="Hartigan J."/>
            <person name="Wu L."/>
            <person name="Liu C."/>
            <person name="Parmigiani G."/>
            <person name="Park B.H."/>
            <person name="Bachman K.E."/>
            <person name="Papadopoulos N."/>
            <person name="Vogelstein B."/>
            <person name="Kinzler K.W."/>
            <person name="Velculescu V.E."/>
        </authorList>
    </citation>
    <scope>VARIANT [LARGE SCALE ANALYSIS] THR-457</scope>
</reference>
<reference key="5">
    <citation type="journal article" date="2007" name="J. Cell Sci.">
        <title>AMER1 regulates the distribution of the tumor suppressor APC between microtubules and the plasma membrane.</title>
        <authorList>
            <person name="Grohmann A."/>
            <person name="Tanneberger K."/>
            <person name="Alzner A."/>
            <person name="Schneikert J."/>
            <person name="Behrens J."/>
        </authorList>
    </citation>
    <scope>INTERACTION WITH APC</scope>
</reference>
<reference key="6">
    <citation type="journal article" date="2010" name="BMC Evol. Biol.">
        <title>The WTX/AMER1 gene family: evolution, signature and function.</title>
        <authorList>
            <person name="Boutet A."/>
            <person name="Comai G."/>
            <person name="Schedl A."/>
        </authorList>
    </citation>
    <scope>GENE FAMILY</scope>
</reference>
<reference key="7">
    <citation type="journal article" date="2012" name="J. Biol. Chem.">
        <title>Amer2 protein is a novel negative regulator of Wnt/beta-Catenin signaling involved in neuroectodermal patterning.</title>
        <authorList>
            <person name="Pfister A.S."/>
            <person name="Tanneberger K."/>
            <person name="Schambony A."/>
            <person name="Behrens J."/>
        </authorList>
    </citation>
    <scope>FUNCTION</scope>
    <scope>SUBCELLULAR LOCATION</scope>
    <scope>PTDINS(4,5)P2-BINDING</scope>
    <scope>INTERACTION WITH APC</scope>
</reference>
<name>AMER2_HUMAN</name>
<evidence type="ECO:0000250" key="1">
    <source>
        <dbReference type="UniProtKB" id="Q8CCJ4"/>
    </source>
</evidence>
<evidence type="ECO:0000256" key="2">
    <source>
        <dbReference type="SAM" id="MobiDB-lite"/>
    </source>
</evidence>
<evidence type="ECO:0000269" key="3">
    <source>
    </source>
</evidence>
<evidence type="ECO:0000269" key="4">
    <source>
    </source>
</evidence>
<evidence type="ECO:0000269" key="5">
    <source>
    </source>
</evidence>
<evidence type="ECO:0000303" key="6">
    <source>
    </source>
</evidence>
<evidence type="ECO:0000303" key="7">
    <source>
    </source>
</evidence>
<evidence type="ECO:0000305" key="8"/>
<dbReference type="EMBL" id="AK055049">
    <property type="protein sequence ID" value="BAB70845.1"/>
    <property type="molecule type" value="mRNA"/>
</dbReference>
<dbReference type="EMBL" id="AK098343">
    <property type="protein sequence ID" value="BAC05288.1"/>
    <property type="status" value="ALT_INIT"/>
    <property type="molecule type" value="mRNA"/>
</dbReference>
<dbReference type="EMBL" id="AL359757">
    <property type="status" value="NOT_ANNOTATED_CDS"/>
    <property type="molecule type" value="Genomic_DNA"/>
</dbReference>
<dbReference type="EMBL" id="BC032653">
    <property type="protein sequence ID" value="AAH32653.2"/>
    <property type="status" value="ALT_INIT"/>
    <property type="molecule type" value="mRNA"/>
</dbReference>
<dbReference type="EMBL" id="BC041392">
    <property type="protein sequence ID" value="AAH41392.1"/>
    <property type="status" value="ALT_FRAME"/>
    <property type="molecule type" value="mRNA"/>
</dbReference>
<dbReference type="CCDS" id="CCDS53859.1">
    <molecule id="Q8N7J2-1"/>
</dbReference>
<dbReference type="CCDS" id="CCDS9312.1">
    <molecule id="Q8N7J2-2"/>
</dbReference>
<dbReference type="RefSeq" id="NP_689917.2">
    <molecule id="Q8N7J2-1"/>
    <property type="nucleotide sequence ID" value="NM_152704.3"/>
</dbReference>
<dbReference type="RefSeq" id="NP_954589.1">
    <molecule id="Q8N7J2-2"/>
    <property type="nucleotide sequence ID" value="NM_199138.2"/>
</dbReference>
<dbReference type="RefSeq" id="XP_005266336.1">
    <molecule id="Q8N7J2-1"/>
    <property type="nucleotide sequence ID" value="XM_005266279.5"/>
</dbReference>
<dbReference type="RefSeq" id="XP_005266337.1">
    <molecule id="Q8N7J2-1"/>
    <property type="nucleotide sequence ID" value="XM_005266280.5"/>
</dbReference>
<dbReference type="RefSeq" id="XP_016875904.1">
    <molecule id="Q8N7J2-1"/>
    <property type="nucleotide sequence ID" value="XM_017020415.2"/>
</dbReference>
<dbReference type="RefSeq" id="XP_054230144.1">
    <molecule id="Q8N7J2-1"/>
    <property type="nucleotide sequence ID" value="XM_054374169.1"/>
</dbReference>
<dbReference type="RefSeq" id="XP_054230145.1">
    <molecule id="Q8N7J2-1"/>
    <property type="nucleotide sequence ID" value="XM_054374170.1"/>
</dbReference>
<dbReference type="RefSeq" id="XP_054230146.1">
    <molecule id="Q8N7J2-1"/>
    <property type="nucleotide sequence ID" value="XM_054374171.1"/>
</dbReference>
<dbReference type="BioGRID" id="128520">
    <property type="interactions" value="5"/>
</dbReference>
<dbReference type="FunCoup" id="Q8N7J2">
    <property type="interactions" value="401"/>
</dbReference>
<dbReference type="IntAct" id="Q8N7J2">
    <property type="interactions" value="2"/>
</dbReference>
<dbReference type="MINT" id="Q8N7J2"/>
<dbReference type="STRING" id="9606.ENSP00000426528"/>
<dbReference type="iPTMnet" id="Q8N7J2"/>
<dbReference type="PhosphoSitePlus" id="Q8N7J2"/>
<dbReference type="SwissPalm" id="Q8N7J2"/>
<dbReference type="BioMuta" id="AMER2"/>
<dbReference type="DMDM" id="338817901"/>
<dbReference type="jPOST" id="Q8N7J2"/>
<dbReference type="MassIVE" id="Q8N7J2"/>
<dbReference type="PaxDb" id="9606-ENSP00000426528"/>
<dbReference type="PeptideAtlas" id="Q8N7J2"/>
<dbReference type="ProteomicsDB" id="72299">
    <molecule id="Q8N7J2-1"/>
</dbReference>
<dbReference type="ProteomicsDB" id="72300">
    <molecule id="Q8N7J2-2"/>
</dbReference>
<dbReference type="Antibodypedia" id="49984">
    <property type="antibodies" value="24 antibodies from 9 providers"/>
</dbReference>
<dbReference type="DNASU" id="219287"/>
<dbReference type="Ensembl" id="ENST00000357816.2">
    <molecule id="Q8N7J2-2"/>
    <property type="protein sequence ID" value="ENSP00000350469.2"/>
    <property type="gene ID" value="ENSG00000165566.13"/>
</dbReference>
<dbReference type="Ensembl" id="ENST00000515384.2">
    <molecule id="Q8N7J2-1"/>
    <property type="protein sequence ID" value="ENSP00000426528.1"/>
    <property type="gene ID" value="ENSG00000165566.13"/>
</dbReference>
<dbReference type="GeneID" id="219287"/>
<dbReference type="KEGG" id="hsa:219287"/>
<dbReference type="MANE-Select" id="ENST00000515384.2">
    <property type="protein sequence ID" value="ENSP00000426528.1"/>
    <property type="RefSeq nucleotide sequence ID" value="NM_152704.4"/>
    <property type="RefSeq protein sequence ID" value="NP_689917.2"/>
</dbReference>
<dbReference type="UCSC" id="uc001uqb.5">
    <molecule id="Q8N7J2-1"/>
    <property type="organism name" value="human"/>
</dbReference>
<dbReference type="AGR" id="HGNC:26360"/>
<dbReference type="CTD" id="219287"/>
<dbReference type="DisGeNET" id="219287"/>
<dbReference type="GeneCards" id="AMER2"/>
<dbReference type="HGNC" id="HGNC:26360">
    <property type="gene designation" value="AMER2"/>
</dbReference>
<dbReference type="HPA" id="ENSG00000165566">
    <property type="expression patterns" value="Group enriched (brain, retina)"/>
</dbReference>
<dbReference type="MIM" id="614659">
    <property type="type" value="gene"/>
</dbReference>
<dbReference type="neXtProt" id="NX_Q8N7J2"/>
<dbReference type="OpenTargets" id="ENSG00000165566"/>
<dbReference type="PharmGKB" id="PA145148898"/>
<dbReference type="VEuPathDB" id="HostDB:ENSG00000165566"/>
<dbReference type="eggNOG" id="ENOG502QU08">
    <property type="taxonomic scope" value="Eukaryota"/>
</dbReference>
<dbReference type="GeneTree" id="ENSGT00530000063529"/>
<dbReference type="HOGENOM" id="CLU_032195_0_0_1"/>
<dbReference type="InParanoid" id="Q8N7J2"/>
<dbReference type="OMA" id="RICLMFA"/>
<dbReference type="OrthoDB" id="9943219at2759"/>
<dbReference type="PAN-GO" id="Q8N7J2">
    <property type="GO annotations" value="4 GO annotations based on evolutionary models"/>
</dbReference>
<dbReference type="PhylomeDB" id="Q8N7J2"/>
<dbReference type="TreeFam" id="TF333006"/>
<dbReference type="PathwayCommons" id="Q8N7J2"/>
<dbReference type="SignaLink" id="Q8N7J2"/>
<dbReference type="BioGRID-ORCS" id="219287">
    <property type="hits" value="17 hits in 1148 CRISPR screens"/>
</dbReference>
<dbReference type="CD-CODE" id="FB4E32DD">
    <property type="entry name" value="Presynaptic clusters and postsynaptic densities"/>
</dbReference>
<dbReference type="GenomeRNAi" id="219287"/>
<dbReference type="Pharos" id="Q8N7J2">
    <property type="development level" value="Tbio"/>
</dbReference>
<dbReference type="PRO" id="PR:Q8N7J2"/>
<dbReference type="Proteomes" id="UP000005640">
    <property type="component" value="Chromosome 13"/>
</dbReference>
<dbReference type="RNAct" id="Q8N7J2">
    <property type="molecule type" value="protein"/>
</dbReference>
<dbReference type="Bgee" id="ENSG00000165566">
    <property type="expression patterns" value="Expressed in endothelial cell and 88 other cell types or tissues"/>
</dbReference>
<dbReference type="GO" id="GO:0005886">
    <property type="term" value="C:plasma membrane"/>
    <property type="evidence" value="ECO:0000314"/>
    <property type="project" value="HPA"/>
</dbReference>
<dbReference type="GO" id="GO:0008013">
    <property type="term" value="F:beta-catenin binding"/>
    <property type="evidence" value="ECO:0000318"/>
    <property type="project" value="GO_Central"/>
</dbReference>
<dbReference type="GO" id="GO:0005546">
    <property type="term" value="F:phosphatidylinositol-4,5-bisphosphate binding"/>
    <property type="evidence" value="ECO:0000314"/>
    <property type="project" value="UniProtKB"/>
</dbReference>
<dbReference type="GO" id="GO:0007398">
    <property type="term" value="P:ectoderm development"/>
    <property type="evidence" value="ECO:0000250"/>
    <property type="project" value="UniProtKB"/>
</dbReference>
<dbReference type="GO" id="GO:0090090">
    <property type="term" value="P:negative regulation of canonical Wnt signaling pathway"/>
    <property type="evidence" value="ECO:0000315"/>
    <property type="project" value="UniProtKB"/>
</dbReference>
<dbReference type="GO" id="GO:0060828">
    <property type="term" value="P:regulation of canonical Wnt signaling pathway"/>
    <property type="evidence" value="ECO:0000318"/>
    <property type="project" value="GO_Central"/>
</dbReference>
<dbReference type="GO" id="GO:0016055">
    <property type="term" value="P:Wnt signaling pathway"/>
    <property type="evidence" value="ECO:0007669"/>
    <property type="project" value="UniProtKB-KW"/>
</dbReference>
<dbReference type="InterPro" id="IPR019003">
    <property type="entry name" value="AMER"/>
</dbReference>
<dbReference type="PANTHER" id="PTHR22237:SF1">
    <property type="entry name" value="APC MEMBRANE RECRUITMENT PROTEIN 2"/>
    <property type="match status" value="1"/>
</dbReference>
<dbReference type="PANTHER" id="PTHR22237">
    <property type="entry name" value="APC MEMBRANE RECRUITMENT PROTEIN 2-RELATED"/>
    <property type="match status" value="1"/>
</dbReference>
<dbReference type="Pfam" id="PF09422">
    <property type="entry name" value="AMER"/>
    <property type="match status" value="1"/>
</dbReference>
<gene>
    <name type="primary">AMER2</name>
    <name type="synonym">FAM123A</name>
</gene>
<sequence>METSRSRGGGGAVSERGGAGASVGVCRRKAEAGAGTGTLAADMDLHCDCAAETPAAEPPSGKINKAAFKLFKKRKSGGTMPSIFGVKNKGDGKSSGPTGLVRSRTHDGLAEVLVLESGRKEEPRGGGDSGGGGGGRPNPGPPRAAGPGGGSLASSSVAKSHSFFSLLKKNGRSENGKGEPVDASKAGGKQKRGLRGLFSGMRWHRKDKRAKAEAAEGRAPGGGLILPGSLTASLECVKEETPRAAREPEEPSQDAPRDPAGEPAGGEEVPAPADRAPARSCREAEGLAHPGDTGARGEDAAGHRRAEPGPGEVRTAEDASRTGAVPVKTVPLVDSEGGSGRAPAAPDPASVDPPSDPSADRICLMFSDVTSLKSFDSLTGCGDIIADQEEEAGPSCDKHVPGPGKPALSKKNPGVVAYQGGGEEMASPDEVDDTYLQEFWDMLSQTEEQGPEPQEGAAKVAAALETKVVPETPKDTRCVEAAKDASSVKRRRLNRIPIEPHPKEEPKHPEKEQQEGVPNSDEGYWDSTTPGPEEDSSSSGKKAGIPRDSYSGDALYDLYADPDGSPATLPGGKDNEETSSLSRLKPVSPGTITCPLRTPGSLLKDSKIPISIKHLTNLPSSHPVVHQQPSRSEMPRTKIPVSKVLVRRVSNRGLAGTTIRATACHDSAKKL</sequence>
<proteinExistence type="evidence at protein level"/>
<organism>
    <name type="scientific">Homo sapiens</name>
    <name type="common">Human</name>
    <dbReference type="NCBI Taxonomy" id="9606"/>
    <lineage>
        <taxon>Eukaryota</taxon>
        <taxon>Metazoa</taxon>
        <taxon>Chordata</taxon>
        <taxon>Craniata</taxon>
        <taxon>Vertebrata</taxon>
        <taxon>Euteleostomi</taxon>
        <taxon>Mammalia</taxon>
        <taxon>Eutheria</taxon>
        <taxon>Euarchontoglires</taxon>
        <taxon>Primates</taxon>
        <taxon>Haplorrhini</taxon>
        <taxon>Catarrhini</taxon>
        <taxon>Hominidae</taxon>
        <taxon>Homo</taxon>
    </lineage>
</organism>
<feature type="chain" id="PRO_0000281885" description="APC membrane recruitment protein 2">
    <location>
        <begin position="1"/>
        <end position="671"/>
    </location>
</feature>
<feature type="region of interest" description="Disordered" evidence="2">
    <location>
        <begin position="1"/>
        <end position="24"/>
    </location>
</feature>
<feature type="region of interest" description="Disordered" evidence="2">
    <location>
        <begin position="76"/>
        <end position="358"/>
    </location>
</feature>
<feature type="region of interest" description="Disordered" evidence="2">
    <location>
        <begin position="391"/>
        <end position="414"/>
    </location>
</feature>
<feature type="region of interest" description="Disordered" evidence="2">
    <location>
        <begin position="444"/>
        <end position="598"/>
    </location>
</feature>
<feature type="compositionally biased region" description="Gly residues" evidence="2">
    <location>
        <begin position="7"/>
        <end position="21"/>
    </location>
</feature>
<feature type="compositionally biased region" description="Gly residues" evidence="2">
    <location>
        <begin position="126"/>
        <end position="137"/>
    </location>
</feature>
<feature type="compositionally biased region" description="Basic and acidic residues" evidence="2">
    <location>
        <begin position="171"/>
        <end position="182"/>
    </location>
</feature>
<feature type="compositionally biased region" description="Basic and acidic residues" evidence="2">
    <location>
        <begin position="236"/>
        <end position="260"/>
    </location>
</feature>
<feature type="compositionally biased region" description="Basic and acidic residues" evidence="2">
    <location>
        <begin position="276"/>
        <end position="286"/>
    </location>
</feature>
<feature type="compositionally biased region" description="Basic and acidic residues" evidence="2">
    <location>
        <begin position="295"/>
        <end position="307"/>
    </location>
</feature>
<feature type="compositionally biased region" description="Low complexity" evidence="2">
    <location>
        <begin position="342"/>
        <end position="353"/>
    </location>
</feature>
<feature type="compositionally biased region" description="Low complexity" evidence="2">
    <location>
        <begin position="447"/>
        <end position="458"/>
    </location>
</feature>
<feature type="compositionally biased region" description="Basic and acidic residues" evidence="2">
    <location>
        <begin position="472"/>
        <end position="487"/>
    </location>
</feature>
<feature type="compositionally biased region" description="Basic and acidic residues" evidence="2">
    <location>
        <begin position="498"/>
        <end position="514"/>
    </location>
</feature>
<feature type="modified residue" description="Phosphoserine" evidence="1">
    <location>
        <position position="162"/>
    </location>
</feature>
<feature type="modified residue" description="Phosphoserine" evidence="1">
    <location>
        <position position="229"/>
    </location>
</feature>
<feature type="modified residue" description="Phosphoserine" evidence="1">
    <location>
        <position position="233"/>
    </location>
</feature>
<feature type="modified residue" description="Phosphoserine" evidence="1">
    <location>
        <position position="355"/>
    </location>
</feature>
<feature type="modified residue" description="Phosphoserine" evidence="1">
    <location>
        <position position="358"/>
    </location>
</feature>
<feature type="splice variant" id="VSP_024089" description="In isoform 2." evidence="6 7">
    <location>
        <begin position="261"/>
        <end position="379"/>
    </location>
</feature>
<feature type="sequence variant" id="VAR_036448" description="In a colorectal cancer sample; somatic mutation." evidence="3">
    <original>A</original>
    <variation>T</variation>
    <location>
        <position position="457"/>
    </location>
</feature>
<feature type="sequence variant" id="VAR_031303" description="In dbSNP:rs2282406.">
    <original>I</original>
    <variation>M</variation>
    <location>
        <position position="659"/>
    </location>
</feature>
<feature type="sequence conflict" description="In Ref. 1; BAB70845." evidence="8" ref="1">
    <original>K</original>
    <variation>E</variation>
    <location>
        <position position="120"/>
    </location>
</feature>
<feature type="sequence conflict" description="In Ref. 3; AAH41392." evidence="8" ref="3">
    <original>P</original>
    <variation>S</variation>
    <location>
        <position position="142"/>
    </location>
</feature>
<feature type="sequence conflict" description="In Ref. 1; BAC05288." evidence="8" ref="1">
    <original>G</original>
    <variation>V</variation>
    <location>
        <position position="265"/>
    </location>
</feature>
<feature type="sequence conflict" description="In Ref. 3; AAH41392." evidence="8" ref="3">
    <original>P</original>
    <variation>A</variation>
    <location>
        <position position="290"/>
    </location>
</feature>
<feature type="sequence conflict" description="In Ref. 1; BAB70845." evidence="8" ref="1">
    <original>M</original>
    <variation>V</variation>
    <location>
        <position position="442"/>
    </location>
</feature>
<feature type="sequence conflict" description="In Ref. 3; AAH41392." evidence="8" ref="3">
    <original>K</original>
    <variation>E</variation>
    <location>
        <position position="511"/>
    </location>
</feature>